<name>PRM1_PICST</name>
<proteinExistence type="inferred from homology"/>
<gene>
    <name type="primary">PRM1</name>
    <name type="ORF">PICST_54949</name>
</gene>
<dbReference type="EMBL" id="CP000496">
    <property type="protein sequence ID" value="ABN64874.2"/>
    <property type="status" value="ALT_TERM"/>
    <property type="molecule type" value="Genomic_DNA"/>
</dbReference>
<dbReference type="RefSeq" id="XP_001382903.2">
    <property type="nucleotide sequence ID" value="XM_001382866.1"/>
</dbReference>
<dbReference type="SMR" id="A3LNK7"/>
<dbReference type="FunCoup" id="A3LNK7">
    <property type="interactions" value="43"/>
</dbReference>
<dbReference type="STRING" id="322104.A3LNK7"/>
<dbReference type="GlyCosmos" id="A3LNK7">
    <property type="glycosylation" value="10 sites, No reported glycans"/>
</dbReference>
<dbReference type="GeneID" id="4837481"/>
<dbReference type="KEGG" id="pic:PICST_54949"/>
<dbReference type="eggNOG" id="ENOG502QRP5">
    <property type="taxonomic scope" value="Eukaryota"/>
</dbReference>
<dbReference type="HOGENOM" id="CLU_010191_1_0_1"/>
<dbReference type="InParanoid" id="A3LNK7"/>
<dbReference type="OrthoDB" id="5356111at2759"/>
<dbReference type="Proteomes" id="UP000002258">
    <property type="component" value="Chromosome 2"/>
</dbReference>
<dbReference type="GO" id="GO:0043332">
    <property type="term" value="C:mating projection tip"/>
    <property type="evidence" value="ECO:0007669"/>
    <property type="project" value="InterPro"/>
</dbReference>
<dbReference type="GO" id="GO:0005886">
    <property type="term" value="C:plasma membrane"/>
    <property type="evidence" value="ECO:0007669"/>
    <property type="project" value="UniProtKB-SubCell"/>
</dbReference>
<dbReference type="GO" id="GO:0032220">
    <property type="term" value="P:plasma membrane fusion involved in cytogamy"/>
    <property type="evidence" value="ECO:0007669"/>
    <property type="project" value="TreeGrafter"/>
</dbReference>
<dbReference type="InterPro" id="IPR026777">
    <property type="entry name" value="PRM1"/>
</dbReference>
<dbReference type="PANTHER" id="PTHR31030">
    <property type="entry name" value="PLASMA MEMBRANE FUSION PROTEIN PRM1"/>
    <property type="match status" value="1"/>
</dbReference>
<dbReference type="PANTHER" id="PTHR31030:SF1">
    <property type="entry name" value="PLASMA MEMBRANE FUSION PROTEIN PRM1"/>
    <property type="match status" value="1"/>
</dbReference>
<protein>
    <recommendedName>
        <fullName>Plasma membrane fusion protein PRM1</fullName>
    </recommendedName>
</protein>
<comment type="function">
    <text evidence="1">Involved in cell fusion during mating by stabilizing the plasma membrane fusion event.</text>
</comment>
<comment type="subcellular location">
    <subcellularLocation>
        <location evidence="1">Cell membrane</location>
        <topology evidence="1">Multi-pass membrane protein</topology>
    </subcellularLocation>
</comment>
<comment type="similarity">
    <text evidence="3">Belongs to the PRM1 family.</text>
</comment>
<accession>A3LNK7</accession>
<feature type="chain" id="PRO_0000337288" description="Plasma membrane fusion protein PRM1">
    <location>
        <begin position="1"/>
        <end position="620"/>
    </location>
</feature>
<feature type="topological domain" description="Extracellular" evidence="1">
    <location>
        <begin position="1"/>
        <end position="19"/>
    </location>
</feature>
<feature type="transmembrane region" description="Helical" evidence="2">
    <location>
        <begin position="20"/>
        <end position="40"/>
    </location>
</feature>
<feature type="topological domain" description="Cytoplasmic" evidence="1">
    <location>
        <begin position="41"/>
        <end position="86"/>
    </location>
</feature>
<feature type="transmembrane region" description="Helical" evidence="2">
    <location>
        <begin position="87"/>
        <end position="107"/>
    </location>
</feature>
<feature type="topological domain" description="Extracellular" evidence="1">
    <location>
        <begin position="108"/>
        <end position="274"/>
    </location>
</feature>
<feature type="transmembrane region" description="Helical" evidence="2">
    <location>
        <begin position="275"/>
        <end position="295"/>
    </location>
</feature>
<feature type="topological domain" description="Cytoplasmic" evidence="1">
    <location>
        <begin position="296"/>
        <end position="352"/>
    </location>
</feature>
<feature type="transmembrane region" description="Helical" evidence="2">
    <location>
        <begin position="353"/>
        <end position="373"/>
    </location>
</feature>
<feature type="topological domain" description="Extracellular" evidence="1">
    <location>
        <begin position="374"/>
        <end position="534"/>
    </location>
</feature>
<feature type="transmembrane region" description="Helical" evidence="2">
    <location>
        <begin position="535"/>
        <end position="555"/>
    </location>
</feature>
<feature type="topological domain" description="Cytoplasmic" evidence="1">
    <location>
        <begin position="556"/>
        <end position="620"/>
    </location>
</feature>
<feature type="glycosylation site" description="N-linked (GlcNAc...) asparagine" evidence="2">
    <location>
        <position position="130"/>
    </location>
</feature>
<feature type="glycosylation site" description="N-linked (GlcNAc...) asparagine" evidence="2">
    <location>
        <position position="169"/>
    </location>
</feature>
<feature type="glycosylation site" description="N-linked (GlcNAc...) asparagine" evidence="2">
    <location>
        <position position="190"/>
    </location>
</feature>
<feature type="glycosylation site" description="N-linked (GlcNAc...) asparagine" evidence="2">
    <location>
        <position position="215"/>
    </location>
</feature>
<feature type="glycosylation site" description="N-linked (GlcNAc...) asparagine" evidence="2">
    <location>
        <position position="235"/>
    </location>
</feature>
<feature type="glycosylation site" description="N-linked (GlcNAc...) asparagine" evidence="2">
    <location>
        <position position="267"/>
    </location>
</feature>
<feature type="glycosylation site" description="N-linked (GlcNAc...) asparagine" evidence="2">
    <location>
        <position position="396"/>
    </location>
</feature>
<feature type="glycosylation site" description="N-linked (GlcNAc...) asparagine" evidence="2">
    <location>
        <position position="432"/>
    </location>
</feature>
<feature type="glycosylation site" description="N-linked (GlcNAc...) asparagine" evidence="2">
    <location>
        <position position="443"/>
    </location>
</feature>
<feature type="glycosylation site" description="N-linked (GlcNAc...) asparagine" evidence="2">
    <location>
        <position position="484"/>
    </location>
</feature>
<sequence>MPYLNFAERISQVYLNKYTLALVLVTIKVYLFQKTLVAAVRNIPDFSDCSVDELPTKVSVMIRNMVENNLNSFTYSTLALLHVAAKSILNLIWFAVEMLLGTYTCLFKAAIVGTSDFAADTSEMVVKGLNTTIVEITHDIQSGLDGLSSILNKVVSTASKVADFFTGNNNSDSPDQYQKSISLSLGKLTNLSIPSSVLGEINKIRIDPDFSSVENSTKKLIEEPFTSLTNQWNQNETLSLGGVKFPLLQPLSVCDIGSKSIQELSHNLSTSVEMAAKIVIIILAICAVLVMVPLIYDEWRKWNREERIIGNLVNQNTHYYFDLREAFSNLLHPYLRFLPKSWLSTYVFSNYSISFLLVGLLGLFVVFLQYIILRILIKKAKGTDIDTSQMTKELSNMTSVYLSQIDSYFQKQEDNINDKLFGSVKSTSSKINSTLHEFMSTLNDTVNSIFSNTPFSGPVNTIVYCTIGRKIDKVESGLTWINDNLSVKIPNINKKQLSDNLKSVISESDSSAGSVFAKGVQKTIAMYKSNLFLEFVISISLVGVWVMQLLIGVIIAVTKSHLKRRRLGSLTSSLDKTRISSPKELTKEEKLQYGYGFSVTNPYEVQRYSSKLSGTKIYNT</sequence>
<keyword id="KW-1003">Cell membrane</keyword>
<keyword id="KW-0184">Conjugation</keyword>
<keyword id="KW-0325">Glycoprotein</keyword>
<keyword id="KW-0472">Membrane</keyword>
<keyword id="KW-1185">Reference proteome</keyword>
<keyword id="KW-0812">Transmembrane</keyword>
<keyword id="KW-1133">Transmembrane helix</keyword>
<reference key="1">
    <citation type="journal article" date="2007" name="Nat. Biotechnol.">
        <title>Genome sequence of the lignocellulose-bioconverting and xylose-fermenting yeast Pichia stipitis.</title>
        <authorList>
            <person name="Jeffries T.W."/>
            <person name="Grigoriev I.V."/>
            <person name="Grimwood J."/>
            <person name="Laplaza J.M."/>
            <person name="Aerts A."/>
            <person name="Salamov A."/>
            <person name="Schmutz J."/>
            <person name="Lindquist E."/>
            <person name="Dehal P."/>
            <person name="Shapiro H."/>
            <person name="Jin Y.-S."/>
            <person name="Passoth V."/>
            <person name="Richardson P.M."/>
        </authorList>
    </citation>
    <scope>NUCLEOTIDE SEQUENCE [LARGE SCALE GENOMIC DNA]</scope>
    <source>
        <strain>ATCC 58785 / CBS 6054 / NBRC 10063 / NRRL Y-11545</strain>
    </source>
</reference>
<organism>
    <name type="scientific">Scheffersomyces stipitis (strain ATCC 58785 / CBS 6054 / NBRC 10063 / NRRL Y-11545)</name>
    <name type="common">Yeast</name>
    <name type="synonym">Pichia stipitis</name>
    <dbReference type="NCBI Taxonomy" id="322104"/>
    <lineage>
        <taxon>Eukaryota</taxon>
        <taxon>Fungi</taxon>
        <taxon>Dikarya</taxon>
        <taxon>Ascomycota</taxon>
        <taxon>Saccharomycotina</taxon>
        <taxon>Pichiomycetes</taxon>
        <taxon>Debaryomycetaceae</taxon>
        <taxon>Scheffersomyces</taxon>
    </lineage>
</organism>
<evidence type="ECO:0000250" key="1"/>
<evidence type="ECO:0000255" key="2"/>
<evidence type="ECO:0000305" key="3"/>